<feature type="chain" id="PRO_0000327207" description="Gamma-secretase subunit PEN-2">
    <location>
        <begin position="1"/>
        <end position="101"/>
    </location>
</feature>
<feature type="topological domain" description="Cytoplasmic" evidence="1">
    <location>
        <begin position="1"/>
        <end position="17"/>
    </location>
</feature>
<feature type="intramembrane region" description="Helical" evidence="1">
    <location>
        <begin position="18"/>
        <end position="36"/>
    </location>
</feature>
<feature type="topological domain" description="Cytoplasmic" evidence="1">
    <location>
        <begin position="37"/>
        <end position="57"/>
    </location>
</feature>
<feature type="transmembrane region" description="Helical" evidence="1">
    <location>
        <begin position="58"/>
        <end position="78"/>
    </location>
</feature>
<feature type="topological domain" description="Lumenal" evidence="1">
    <location>
        <begin position="79"/>
        <end position="101"/>
    </location>
</feature>
<accession>Q6QI68</accession>
<proteinExistence type="inferred from homology"/>
<sequence>MNLERVSNEEKLNLCRKYYLGGFAFLPFLWLVNIFWFFKEAFFAPAYTEQSQIKGYVWRSAVGFLFWVIVLTTWITIFQIYRPRWGALGDYLSFTIPLGTP</sequence>
<name>PEN2_RAT</name>
<protein>
    <recommendedName>
        <fullName>Gamma-secretase subunit PEN-2</fullName>
    </recommendedName>
    <alternativeName>
        <fullName>Liver regeneration-related protein LRRGT00140</fullName>
    </alternativeName>
    <alternativeName>
        <fullName>Presenilin enhancer protein 2</fullName>
    </alternativeName>
</protein>
<organism>
    <name type="scientific">Rattus norvegicus</name>
    <name type="common">Rat</name>
    <dbReference type="NCBI Taxonomy" id="10116"/>
    <lineage>
        <taxon>Eukaryota</taxon>
        <taxon>Metazoa</taxon>
        <taxon>Chordata</taxon>
        <taxon>Craniata</taxon>
        <taxon>Vertebrata</taxon>
        <taxon>Euteleostomi</taxon>
        <taxon>Mammalia</taxon>
        <taxon>Eutheria</taxon>
        <taxon>Euarchontoglires</taxon>
        <taxon>Glires</taxon>
        <taxon>Rodentia</taxon>
        <taxon>Myomorpha</taxon>
        <taxon>Muroidea</taxon>
        <taxon>Muridae</taxon>
        <taxon>Murinae</taxon>
        <taxon>Rattus</taxon>
    </lineage>
</organism>
<dbReference type="EMBL" id="AY539891">
    <property type="protein sequence ID" value="AAS66231.1"/>
    <property type="molecule type" value="mRNA"/>
</dbReference>
<dbReference type="EMBL" id="BC100104">
    <property type="protein sequence ID" value="AAI00105.1"/>
    <property type="molecule type" value="mRNA"/>
</dbReference>
<dbReference type="RefSeq" id="NP_001008764.1">
    <property type="nucleotide sequence ID" value="NM_001008764.2"/>
</dbReference>
<dbReference type="RefSeq" id="XP_006228832.1">
    <property type="nucleotide sequence ID" value="XM_006228770.3"/>
</dbReference>
<dbReference type="SMR" id="Q6QI68"/>
<dbReference type="BioGRID" id="253977">
    <property type="interactions" value="1"/>
</dbReference>
<dbReference type="FunCoup" id="Q6QI68">
    <property type="interactions" value="1958"/>
</dbReference>
<dbReference type="IntAct" id="Q6QI68">
    <property type="interactions" value="1"/>
</dbReference>
<dbReference type="STRING" id="10116.ENSRNOP00000028438"/>
<dbReference type="PhosphoSitePlus" id="Q6QI68"/>
<dbReference type="PaxDb" id="10116-ENSRNOP00000028438"/>
<dbReference type="Ensembl" id="ENSRNOT00000028438.5">
    <property type="protein sequence ID" value="ENSRNOP00000028438.3"/>
    <property type="gene ID" value="ENSRNOG00000020941.5"/>
</dbReference>
<dbReference type="GeneID" id="292788"/>
<dbReference type="KEGG" id="rno:292788"/>
<dbReference type="AGR" id="RGD:1312037"/>
<dbReference type="CTD" id="55851"/>
<dbReference type="RGD" id="1312037">
    <property type="gene designation" value="Psenen"/>
</dbReference>
<dbReference type="eggNOG" id="KOG3402">
    <property type="taxonomic scope" value="Eukaryota"/>
</dbReference>
<dbReference type="GeneTree" id="ENSGT00390000016319"/>
<dbReference type="HOGENOM" id="CLU_124142_2_0_1"/>
<dbReference type="InParanoid" id="Q6QI68"/>
<dbReference type="OMA" id="KLYLCKW"/>
<dbReference type="PhylomeDB" id="Q6QI68"/>
<dbReference type="TreeFam" id="TF313116"/>
<dbReference type="Reactome" id="R-RNO-1251985">
    <property type="pathway name" value="Nuclear signaling by ERBB4"/>
</dbReference>
<dbReference type="Reactome" id="R-RNO-193692">
    <property type="pathway name" value="Regulated proteolysis of p75NTR"/>
</dbReference>
<dbReference type="Reactome" id="R-RNO-205043">
    <property type="pathway name" value="NRIF signals cell death from the nucleus"/>
</dbReference>
<dbReference type="Reactome" id="R-RNO-3928665">
    <property type="pathway name" value="EPH-ephrin mediated repulsion of cells"/>
</dbReference>
<dbReference type="Reactome" id="R-RNO-9013507">
    <property type="pathway name" value="NOTCH3 Activation and Transmission of Signal to the Nucleus"/>
</dbReference>
<dbReference type="Reactome" id="R-RNO-9017802">
    <property type="pathway name" value="Noncanonical activation of NOTCH3"/>
</dbReference>
<dbReference type="Reactome" id="R-RNO-9839383">
    <property type="pathway name" value="TGFBR3 PTM regulation"/>
</dbReference>
<dbReference type="PRO" id="PR:Q6QI68"/>
<dbReference type="Proteomes" id="UP000002494">
    <property type="component" value="Chromosome 1"/>
</dbReference>
<dbReference type="Bgee" id="ENSRNOG00000020941">
    <property type="expression patterns" value="Expressed in stomach and 20 other cell types or tissues"/>
</dbReference>
<dbReference type="GO" id="GO:0005783">
    <property type="term" value="C:endoplasmic reticulum"/>
    <property type="evidence" value="ECO:0000266"/>
    <property type="project" value="RGD"/>
</dbReference>
<dbReference type="GO" id="GO:0005789">
    <property type="term" value="C:endoplasmic reticulum membrane"/>
    <property type="evidence" value="ECO:0007669"/>
    <property type="project" value="UniProtKB-SubCell"/>
</dbReference>
<dbReference type="GO" id="GO:0070765">
    <property type="term" value="C:gamma-secretase complex"/>
    <property type="evidence" value="ECO:0000250"/>
    <property type="project" value="UniProtKB"/>
</dbReference>
<dbReference type="GO" id="GO:0005794">
    <property type="term" value="C:Golgi apparatus"/>
    <property type="evidence" value="ECO:0000266"/>
    <property type="project" value="RGD"/>
</dbReference>
<dbReference type="GO" id="GO:0032580">
    <property type="term" value="C:Golgi cisterna membrane"/>
    <property type="evidence" value="ECO:0007669"/>
    <property type="project" value="UniProtKB-SubCell"/>
</dbReference>
<dbReference type="GO" id="GO:0016020">
    <property type="term" value="C:membrane"/>
    <property type="evidence" value="ECO:0000250"/>
    <property type="project" value="UniProtKB"/>
</dbReference>
<dbReference type="GO" id="GO:0005886">
    <property type="term" value="C:plasma membrane"/>
    <property type="evidence" value="ECO:0000266"/>
    <property type="project" value="RGD"/>
</dbReference>
<dbReference type="GO" id="GO:0042734">
    <property type="term" value="C:presynaptic membrane"/>
    <property type="evidence" value="ECO:0000314"/>
    <property type="project" value="SynGO"/>
</dbReference>
<dbReference type="GO" id="GO:0061133">
    <property type="term" value="F:endopeptidase activator activity"/>
    <property type="evidence" value="ECO:0000266"/>
    <property type="project" value="RGD"/>
</dbReference>
<dbReference type="GO" id="GO:0019899">
    <property type="term" value="F:enzyme binding"/>
    <property type="evidence" value="ECO:0000266"/>
    <property type="project" value="RGD"/>
</dbReference>
<dbReference type="GO" id="GO:0042987">
    <property type="term" value="P:amyloid precursor protein catabolic process"/>
    <property type="evidence" value="ECO:0000266"/>
    <property type="project" value="RGD"/>
</dbReference>
<dbReference type="GO" id="GO:0042982">
    <property type="term" value="P:amyloid precursor protein metabolic process"/>
    <property type="evidence" value="ECO:0000250"/>
    <property type="project" value="UniProtKB"/>
</dbReference>
<dbReference type="GO" id="GO:0034205">
    <property type="term" value="P:amyloid-beta formation"/>
    <property type="evidence" value="ECO:0000250"/>
    <property type="project" value="UniProtKB"/>
</dbReference>
<dbReference type="GO" id="GO:0006509">
    <property type="term" value="P:membrane protein ectodomain proteolysis"/>
    <property type="evidence" value="ECO:0000266"/>
    <property type="project" value="RGD"/>
</dbReference>
<dbReference type="GO" id="GO:0031293">
    <property type="term" value="P:membrane protein intracellular domain proteolysis"/>
    <property type="evidence" value="ECO:0000266"/>
    <property type="project" value="RGD"/>
</dbReference>
<dbReference type="GO" id="GO:0007220">
    <property type="term" value="P:Notch receptor processing"/>
    <property type="evidence" value="ECO:0000266"/>
    <property type="project" value="RGD"/>
</dbReference>
<dbReference type="GO" id="GO:0007219">
    <property type="term" value="P:Notch signaling pathway"/>
    <property type="evidence" value="ECO:0007669"/>
    <property type="project" value="UniProtKB-KW"/>
</dbReference>
<dbReference type="GO" id="GO:0016485">
    <property type="term" value="P:protein processing"/>
    <property type="evidence" value="ECO:0000266"/>
    <property type="project" value="RGD"/>
</dbReference>
<dbReference type="InterPro" id="IPR019379">
    <property type="entry name" value="Gamma_Secretase_Asp_P_PEN2"/>
</dbReference>
<dbReference type="PANTHER" id="PTHR16318">
    <property type="entry name" value="GAMMA-SECRETASE SUBUNIT PEN-2"/>
    <property type="match status" value="1"/>
</dbReference>
<dbReference type="PANTHER" id="PTHR16318:SF0">
    <property type="entry name" value="GAMMA-SECRETASE SUBUNIT PEN-2"/>
    <property type="match status" value="1"/>
</dbReference>
<dbReference type="Pfam" id="PF10251">
    <property type="entry name" value="PEN-2"/>
    <property type="match status" value="1"/>
</dbReference>
<evidence type="ECO:0000250" key="1">
    <source>
        <dbReference type="UniProtKB" id="Q9NZ42"/>
    </source>
</evidence>
<evidence type="ECO:0000305" key="2"/>
<gene>
    <name type="primary">Psenen</name>
</gene>
<reference key="1">
    <citation type="submission" date="2004-02" db="EMBL/GenBank/DDBJ databases">
        <title>Liver regeneration after PH.</title>
        <authorList>
            <person name="Xu C.S."/>
            <person name="Zhang L."/>
            <person name="Chang C.F."/>
            <person name="Han H.P."/>
            <person name="Wang G.P."/>
            <person name="Chai L.Q."/>
            <person name="Yuan J.Y."/>
            <person name="Yang K.J."/>
            <person name="Zhao L.F."/>
            <person name="Ma H."/>
            <person name="Wang L."/>
            <person name="Wang S.F."/>
            <person name="Xing X.K."/>
            <person name="Shen G.M."/>
            <person name="Shi J.B."/>
            <person name="Rahman S."/>
            <person name="Wang Q.N."/>
            <person name="Zhang J.B."/>
        </authorList>
    </citation>
    <scope>NUCLEOTIDE SEQUENCE [LARGE SCALE MRNA]</scope>
</reference>
<reference key="2">
    <citation type="journal article" date="2004" name="Genome Res.">
        <title>The status, quality, and expansion of the NIH full-length cDNA project: the Mammalian Gene Collection (MGC).</title>
        <authorList>
            <consortium name="The MGC Project Team"/>
        </authorList>
    </citation>
    <scope>NUCLEOTIDE SEQUENCE [LARGE SCALE MRNA]</scope>
    <source>
        <tissue>Spleen</tissue>
    </source>
</reference>
<comment type="function">
    <text evidence="1">Essential subunit of the gamma-secretase complex, an endoprotease complex that catalyzes the intramembrane cleavage of integral membrane proteins such as Notch receptors and APP (amyloid-beta precursor protein). The gamma-secretase complex plays a role in Notch and Wnt signaling cascades and regulation of downstream processes via its role in processing key regulatory proteins, and by regulating cytosolic CTNNB1 levels. PSENEN modulates both endoproteolysis of presenilin and gamma-secretase activity.</text>
</comment>
<comment type="subunit">
    <text evidence="1">The functional gamma-secretase complex is composed of at least four polypeptides: a presenilin homodimer (PSEN1 or PSEN2), nicastrin (NCSTN), APH1 (APH1A or APH1B) and PSENEN.</text>
</comment>
<comment type="subcellular location">
    <subcellularLocation>
        <location evidence="1">Endoplasmic reticulum membrane</location>
        <topology evidence="1">Multi-pass membrane protein</topology>
    </subcellularLocation>
    <subcellularLocation>
        <location evidence="1">Golgi apparatus</location>
        <location evidence="1">Golgi stack membrane</location>
        <topology evidence="1">Multi-pass membrane protein</topology>
    </subcellularLocation>
    <subcellularLocation>
        <location evidence="1">Cell membrane</location>
        <topology evidence="1">Multi-pass membrane protein</topology>
    </subcellularLocation>
    <subcellularLocation>
        <location evidence="1">Membrane</location>
        <topology evidence="1">Multi-pass membrane protein</topology>
    </subcellularLocation>
    <text evidence="1">Predominantly located in the endoplasmic reticulum and in the cis-Golgi.</text>
</comment>
<comment type="similarity">
    <text evidence="2">Belongs to the PEN-2 family.</text>
</comment>
<comment type="caution">
    <text evidence="2">3D-structure analysis of the human homolog indicates that the membrane topology differs from the predictions. Contrary to predictions, the N-terminus contains two short helices that dip into the membrane, but do not cross it. The C-terminus contains the single transmembrane helix. This gives rise to a topology where the N-terminus is cytoplasmic and the C-terminus is lumenal.</text>
</comment>
<keyword id="KW-1003">Cell membrane</keyword>
<keyword id="KW-0256">Endoplasmic reticulum</keyword>
<keyword id="KW-0333">Golgi apparatus</keyword>
<keyword id="KW-0472">Membrane</keyword>
<keyword id="KW-0914">Notch signaling pathway</keyword>
<keyword id="KW-1185">Reference proteome</keyword>
<keyword id="KW-0812">Transmembrane</keyword>
<keyword id="KW-1133">Transmembrane helix</keyword>